<reference key="1">
    <citation type="submission" date="2007-02" db="EMBL/GenBank/DDBJ databases">
        <title>Complete sequence of chromosome of Yersinia pestis Pestoides F.</title>
        <authorList>
            <consortium name="US DOE Joint Genome Institute"/>
            <person name="Copeland A."/>
            <person name="Lucas S."/>
            <person name="Lapidus A."/>
            <person name="Barry K."/>
            <person name="Detter J.C."/>
            <person name="Glavina del Rio T."/>
            <person name="Hammon N."/>
            <person name="Israni S."/>
            <person name="Dalin E."/>
            <person name="Tice H."/>
            <person name="Pitluck S."/>
            <person name="Di Bartolo G."/>
            <person name="Chain P."/>
            <person name="Malfatti S."/>
            <person name="Shin M."/>
            <person name="Vergez L."/>
            <person name="Schmutz J."/>
            <person name="Larimer F."/>
            <person name="Land M."/>
            <person name="Hauser L."/>
            <person name="Worsham P."/>
            <person name="Chu M."/>
            <person name="Bearden S."/>
            <person name="Garcia E."/>
            <person name="Richardson P."/>
        </authorList>
    </citation>
    <scope>NUCLEOTIDE SEQUENCE [LARGE SCALE GENOMIC DNA]</scope>
    <source>
        <strain>Pestoides F</strain>
    </source>
</reference>
<keyword id="KW-0997">Cell inner membrane</keyword>
<keyword id="KW-1003">Cell membrane</keyword>
<keyword id="KW-0249">Electron transport</keyword>
<keyword id="KW-0285">Flavoprotein</keyword>
<keyword id="KW-0288">FMN</keyword>
<keyword id="KW-0349">Heme</keyword>
<keyword id="KW-0408">Iron</keyword>
<keyword id="KW-0472">Membrane</keyword>
<keyword id="KW-0479">Metal-binding</keyword>
<keyword id="KW-0812">Transmembrane</keyword>
<keyword id="KW-1133">Transmembrane helix</keyword>
<keyword id="KW-0813">Transport</keyword>
<proteinExistence type="inferred from homology"/>
<sequence>MRLSLRHITWLKIAIWLAATLPLLWLVLSINLGGLSADPAKDIQHFTGRMALKLLLATLLVSPLARYSKQPLLLRCRRLLGLWCFAWGTLHLLSYSILELGLSNIGLLGHELINRPYLTLGIISWLVLLALALTSTRWAQRKMGARWQKLHNWVYVVAILAPIHYLWSVKTLSPWPIIYAVMAALLLLLRYKLLLPRYKKFRQWFR</sequence>
<accession>A4THC5</accession>
<dbReference type="EMBL" id="CP000668">
    <property type="protein sequence ID" value="ABP38687.1"/>
    <property type="molecule type" value="Genomic_DNA"/>
</dbReference>
<dbReference type="RefSeq" id="WP_002210072.1">
    <property type="nucleotide sequence ID" value="NZ_CP009715.1"/>
</dbReference>
<dbReference type="SMR" id="A4THC5"/>
<dbReference type="GeneID" id="57975086"/>
<dbReference type="KEGG" id="ypp:YPDSF_0268"/>
<dbReference type="PATRIC" id="fig|386656.14.peg.1566"/>
<dbReference type="GO" id="GO:0005886">
    <property type="term" value="C:plasma membrane"/>
    <property type="evidence" value="ECO:0007669"/>
    <property type="project" value="UniProtKB-SubCell"/>
</dbReference>
<dbReference type="GO" id="GO:0009055">
    <property type="term" value="F:electron transfer activity"/>
    <property type="evidence" value="ECO:0007669"/>
    <property type="project" value="UniProtKB-UniRule"/>
</dbReference>
<dbReference type="GO" id="GO:0010181">
    <property type="term" value="F:FMN binding"/>
    <property type="evidence" value="ECO:0007669"/>
    <property type="project" value="UniProtKB-UniRule"/>
</dbReference>
<dbReference type="GO" id="GO:0020037">
    <property type="term" value="F:heme binding"/>
    <property type="evidence" value="ECO:0007669"/>
    <property type="project" value="UniProtKB-UniRule"/>
</dbReference>
<dbReference type="GO" id="GO:0046872">
    <property type="term" value="F:metal ion binding"/>
    <property type="evidence" value="ECO:0007669"/>
    <property type="project" value="UniProtKB-KW"/>
</dbReference>
<dbReference type="GO" id="GO:0016679">
    <property type="term" value="F:oxidoreductase activity, acting on diphenols and related substances as donors"/>
    <property type="evidence" value="ECO:0007669"/>
    <property type="project" value="TreeGrafter"/>
</dbReference>
<dbReference type="GO" id="GO:0030091">
    <property type="term" value="P:protein repair"/>
    <property type="evidence" value="ECO:0007669"/>
    <property type="project" value="UniProtKB-UniRule"/>
</dbReference>
<dbReference type="HAMAP" id="MF_01207">
    <property type="entry name" value="MsrQ"/>
    <property type="match status" value="1"/>
</dbReference>
<dbReference type="InterPro" id="IPR013130">
    <property type="entry name" value="Fe3_Rdtase_TM_dom"/>
</dbReference>
<dbReference type="InterPro" id="IPR022837">
    <property type="entry name" value="MsrQ-like"/>
</dbReference>
<dbReference type="NCBIfam" id="NF003832">
    <property type="entry name" value="PRK05419.1-4"/>
    <property type="match status" value="1"/>
</dbReference>
<dbReference type="PANTHER" id="PTHR36964">
    <property type="entry name" value="PROTEIN-METHIONINE-SULFOXIDE REDUCTASE HEME-BINDING SUBUNIT MSRQ"/>
    <property type="match status" value="1"/>
</dbReference>
<dbReference type="PANTHER" id="PTHR36964:SF1">
    <property type="entry name" value="PROTEIN-METHIONINE-SULFOXIDE REDUCTASE HEME-BINDING SUBUNIT MSRQ"/>
    <property type="match status" value="1"/>
</dbReference>
<dbReference type="Pfam" id="PF01794">
    <property type="entry name" value="Ferric_reduct"/>
    <property type="match status" value="1"/>
</dbReference>
<gene>
    <name evidence="1" type="primary">msrQ</name>
    <name type="ordered locus">YPDSF_0268</name>
</gene>
<comment type="function">
    <text evidence="1">Part of the MsrPQ system that repairs oxidized periplasmic proteins containing methionine sulfoxide residues (Met-O), using respiratory chain electrons. Thus protects these proteins from oxidative-stress damage caused by reactive species of oxygen and chlorine generated by the host defense mechanisms. MsrPQ is essential for the maintenance of envelope integrity under bleach stress, rescuing a wide series of structurally unrelated periplasmic proteins from methionine oxidation. MsrQ provides electrons for reduction to the reductase catalytic subunit MsrP, using the quinone pool of the respiratory chain.</text>
</comment>
<comment type="cofactor">
    <cofactor evidence="1">
        <name>FMN</name>
        <dbReference type="ChEBI" id="CHEBI:58210"/>
    </cofactor>
    <text evidence="1">Binds 1 FMN per subunit.</text>
</comment>
<comment type="cofactor">
    <cofactor evidence="1">
        <name>heme b</name>
        <dbReference type="ChEBI" id="CHEBI:60344"/>
    </cofactor>
    <text evidence="1">Binds 1 heme b (iron(II)-protoporphyrin IX) group per subunit.</text>
</comment>
<comment type="subunit">
    <text evidence="1">Heterodimer of a catalytic subunit (MsrP) and a heme-binding subunit (MsrQ).</text>
</comment>
<comment type="subcellular location">
    <subcellularLocation>
        <location evidence="1">Cell inner membrane</location>
        <topology evidence="1">Multi-pass membrane protein</topology>
    </subcellularLocation>
</comment>
<comment type="similarity">
    <text evidence="1">Belongs to the MsrQ family.</text>
</comment>
<feature type="chain" id="PRO_1000066197" description="Protein-methionine-sulfoxide reductase heme-binding subunit MsrQ">
    <location>
        <begin position="1"/>
        <end position="206"/>
    </location>
</feature>
<feature type="transmembrane region" description="Helical" evidence="1">
    <location>
        <begin position="13"/>
        <end position="33"/>
    </location>
</feature>
<feature type="transmembrane region" description="Helical" evidence="1">
    <location>
        <begin position="79"/>
        <end position="99"/>
    </location>
</feature>
<feature type="transmembrane region" description="Helical" evidence="1">
    <location>
        <begin position="116"/>
        <end position="136"/>
    </location>
</feature>
<feature type="transmembrane region" description="Helical" evidence="1">
    <location>
        <begin position="147"/>
        <end position="167"/>
    </location>
</feature>
<feature type="transmembrane region" description="Helical" evidence="1">
    <location>
        <begin position="169"/>
        <end position="189"/>
    </location>
</feature>
<protein>
    <recommendedName>
        <fullName evidence="1">Protein-methionine-sulfoxide reductase heme-binding subunit MsrQ</fullName>
    </recommendedName>
    <alternativeName>
        <fullName evidence="1">Flavocytochrome MsrQ</fullName>
    </alternativeName>
</protein>
<name>MSRQ_YERPP</name>
<evidence type="ECO:0000255" key="1">
    <source>
        <dbReference type="HAMAP-Rule" id="MF_01207"/>
    </source>
</evidence>
<organism>
    <name type="scientific">Yersinia pestis (strain Pestoides F)</name>
    <dbReference type="NCBI Taxonomy" id="386656"/>
    <lineage>
        <taxon>Bacteria</taxon>
        <taxon>Pseudomonadati</taxon>
        <taxon>Pseudomonadota</taxon>
        <taxon>Gammaproteobacteria</taxon>
        <taxon>Enterobacterales</taxon>
        <taxon>Yersiniaceae</taxon>
        <taxon>Yersinia</taxon>
    </lineage>
</organism>